<accession>Q5SD24</accession>
<evidence type="ECO:0000250" key="1"/>
<evidence type="ECO:0000255" key="2">
    <source>
        <dbReference type="HAMAP-Rule" id="MF_01344"/>
    </source>
</evidence>
<proteinExistence type="inferred from homology"/>
<name>PETD_HUPLU</name>
<reference key="1">
    <citation type="journal article" date="2005" name="Gene">
        <title>The first complete chloroplast genome sequence of a lycophyte, Huperzia lucidula (Lycopodiaceae).</title>
        <authorList>
            <person name="Wolf P.G."/>
            <person name="Karol K.G."/>
            <person name="Mandoli D.F."/>
            <person name="Kuehl J.V."/>
            <person name="Arumuganathan K."/>
            <person name="Ellis M.W."/>
            <person name="Mishler B.D."/>
            <person name="Kelch D.G."/>
            <person name="Olmstead R.G."/>
            <person name="Boore J.L."/>
        </authorList>
    </citation>
    <scope>NUCLEOTIDE SEQUENCE [LARGE SCALE GENOMIC DNA]</scope>
</reference>
<comment type="function">
    <text evidence="2">Component of the cytochrome b6-f complex, which mediates electron transfer between photosystem II (PSII) and photosystem I (PSI), cyclic electron flow around PSI, and state transitions.</text>
</comment>
<comment type="subunit">
    <text evidence="1">The 4 large subunits of the cytochrome b6-f complex are cytochrome b6, subunit IV (17 kDa polypeptide, petD), cytochrome f and the Rieske protein, while the 4 small subunits are petG, petL, petM and petN. The complex functions as a dimer (By similarity).</text>
</comment>
<comment type="subcellular location">
    <subcellularLocation>
        <location evidence="2">Plastid</location>
        <location evidence="2">Chloroplast thylakoid membrane</location>
        <topology evidence="2">Multi-pass membrane protein</topology>
    </subcellularLocation>
</comment>
<comment type="similarity">
    <text evidence="2">Belongs to the cytochrome b family. PetD subfamily.</text>
</comment>
<keyword id="KW-0150">Chloroplast</keyword>
<keyword id="KW-0249">Electron transport</keyword>
<keyword id="KW-0472">Membrane</keyword>
<keyword id="KW-0602">Photosynthesis</keyword>
<keyword id="KW-0934">Plastid</keyword>
<keyword id="KW-0793">Thylakoid</keyword>
<keyword id="KW-0812">Transmembrane</keyword>
<keyword id="KW-1133">Transmembrane helix</keyword>
<keyword id="KW-0813">Transport</keyword>
<protein>
    <recommendedName>
        <fullName evidence="2">Cytochrome b6-f complex subunit 4</fullName>
    </recommendedName>
    <alternativeName>
        <fullName evidence="2">17 kDa polypeptide</fullName>
    </alternativeName>
</protein>
<feature type="chain" id="PRO_0000061864" description="Cytochrome b6-f complex subunit 4">
    <location>
        <begin position="1"/>
        <end position="160"/>
    </location>
</feature>
<feature type="transmembrane region" description="Helical" evidence="2">
    <location>
        <begin position="36"/>
        <end position="56"/>
    </location>
</feature>
<feature type="transmembrane region" description="Helical" evidence="2">
    <location>
        <begin position="95"/>
        <end position="115"/>
    </location>
</feature>
<feature type="transmembrane region" description="Helical" evidence="2">
    <location>
        <begin position="131"/>
        <end position="151"/>
    </location>
</feature>
<gene>
    <name evidence="2" type="primary">petD</name>
</gene>
<organism>
    <name type="scientific">Huperzia lucidula</name>
    <name type="common">Shining clubmoss</name>
    <name type="synonym">Lycopodium lucidulum</name>
    <dbReference type="NCBI Taxonomy" id="37429"/>
    <lineage>
        <taxon>Eukaryota</taxon>
        <taxon>Viridiplantae</taxon>
        <taxon>Streptophyta</taxon>
        <taxon>Embryophyta</taxon>
        <taxon>Tracheophyta</taxon>
        <taxon>Lycopodiopsida</taxon>
        <taxon>Lycopodiales</taxon>
        <taxon>Lycopodiaceae</taxon>
        <taxon>Huperzioideae</taxon>
        <taxon>Huperzia</taxon>
    </lineage>
</organism>
<dbReference type="EMBL" id="AY660566">
    <property type="protein sequence ID" value="AAT80694.1"/>
    <property type="molecule type" value="Genomic_DNA"/>
</dbReference>
<dbReference type="RefSeq" id="YP_209498.1">
    <property type="nucleotide sequence ID" value="NC_006861.1"/>
</dbReference>
<dbReference type="SMR" id="Q5SD24"/>
<dbReference type="GeneID" id="3283795"/>
<dbReference type="GO" id="GO:0009535">
    <property type="term" value="C:chloroplast thylakoid membrane"/>
    <property type="evidence" value="ECO:0007669"/>
    <property type="project" value="UniProtKB-SubCell"/>
</dbReference>
<dbReference type="GO" id="GO:0005739">
    <property type="term" value="C:mitochondrion"/>
    <property type="evidence" value="ECO:0007669"/>
    <property type="project" value="GOC"/>
</dbReference>
<dbReference type="GO" id="GO:0045158">
    <property type="term" value="F:electron transporter, transferring electrons within cytochrome b6/f complex of photosystem II activity"/>
    <property type="evidence" value="ECO:0007669"/>
    <property type="project" value="UniProtKB-UniRule"/>
</dbReference>
<dbReference type="GO" id="GO:0045156">
    <property type="term" value="F:electron transporter, transferring electrons within the cyclic electron transport pathway of photosynthesis activity"/>
    <property type="evidence" value="ECO:0007669"/>
    <property type="project" value="InterPro"/>
</dbReference>
<dbReference type="GO" id="GO:0008121">
    <property type="term" value="F:ubiquinol-cytochrome-c reductase activity"/>
    <property type="evidence" value="ECO:0007669"/>
    <property type="project" value="TreeGrafter"/>
</dbReference>
<dbReference type="GO" id="GO:0006122">
    <property type="term" value="P:mitochondrial electron transport, ubiquinol to cytochrome c"/>
    <property type="evidence" value="ECO:0007669"/>
    <property type="project" value="TreeGrafter"/>
</dbReference>
<dbReference type="GO" id="GO:0009767">
    <property type="term" value="P:photosynthetic electron transport chain"/>
    <property type="evidence" value="ECO:0007669"/>
    <property type="project" value="InterPro"/>
</dbReference>
<dbReference type="CDD" id="cd00290">
    <property type="entry name" value="cytochrome_b_C"/>
    <property type="match status" value="1"/>
</dbReference>
<dbReference type="FunFam" id="1.10.287.980:FF:000001">
    <property type="entry name" value="Cytochrome b6-f complex subunit 4"/>
    <property type="match status" value="1"/>
</dbReference>
<dbReference type="FunFam" id="1.20.5.510:FF:000002">
    <property type="entry name" value="Cytochrome b6-f complex subunit 4"/>
    <property type="match status" value="1"/>
</dbReference>
<dbReference type="Gene3D" id="1.10.287.980">
    <property type="entry name" value="plastocyanin oxidoreductase"/>
    <property type="match status" value="1"/>
</dbReference>
<dbReference type="Gene3D" id="1.20.5.510">
    <property type="entry name" value="Single helix bin"/>
    <property type="match status" value="1"/>
</dbReference>
<dbReference type="HAMAP" id="MF_01344">
    <property type="entry name" value="Cytb6_f_subIV"/>
    <property type="match status" value="1"/>
</dbReference>
<dbReference type="InterPro" id="IPR005798">
    <property type="entry name" value="Cyt_b/b6_C"/>
</dbReference>
<dbReference type="InterPro" id="IPR036150">
    <property type="entry name" value="Cyt_b/b6_C_sf"/>
</dbReference>
<dbReference type="InterPro" id="IPR005870">
    <property type="entry name" value="Cyt_b6/f_cplx_suIV"/>
</dbReference>
<dbReference type="InterPro" id="IPR048260">
    <property type="entry name" value="Cytochrome_b_C_euk/bac"/>
</dbReference>
<dbReference type="NCBIfam" id="TIGR01156">
    <property type="entry name" value="cytb6_f_IV"/>
    <property type="match status" value="1"/>
</dbReference>
<dbReference type="PANTHER" id="PTHR19271">
    <property type="entry name" value="CYTOCHROME B"/>
    <property type="match status" value="1"/>
</dbReference>
<dbReference type="PANTHER" id="PTHR19271:SF41">
    <property type="entry name" value="CYTOCHROME B_B6 C-TERMINAL REGION PROFILE DOMAIN-CONTAINING PROTEIN"/>
    <property type="match status" value="1"/>
</dbReference>
<dbReference type="Pfam" id="PF00032">
    <property type="entry name" value="Cytochrom_B_C"/>
    <property type="match status" value="1"/>
</dbReference>
<dbReference type="PIRSF" id="PIRSF000033">
    <property type="entry name" value="B6f_17K"/>
    <property type="match status" value="1"/>
</dbReference>
<dbReference type="SUPFAM" id="SSF81648">
    <property type="entry name" value="a domain/subunit of cytochrome bc1 complex (Ubiquinol-cytochrome c reductase)"/>
    <property type="match status" value="1"/>
</dbReference>
<dbReference type="PROSITE" id="PS51003">
    <property type="entry name" value="CYTB_CTER"/>
    <property type="match status" value="1"/>
</dbReference>
<sequence>MGVAKKPDLSDPVSRAKLAKGMGHNYYGEPAWPNDLLYIPPVVIPGTIACTVGLAVLEPSMIGEPANPFATPLEILPEWYFSPVFQILRTVPNKLLGVLLMAAVPAGLLVVPFPENVNKFQNPFRRPVATTVFSAGTAVAPWLGIGAALPIDKSLTLGLF</sequence>
<geneLocation type="chloroplast"/>